<name>PSBX_SYNP6</name>
<evidence type="ECO:0000255" key="1">
    <source>
        <dbReference type="HAMAP-Rule" id="MF_01386"/>
    </source>
</evidence>
<accession>Q5N0A1</accession>
<keyword id="KW-0472">Membrane</keyword>
<keyword id="KW-0602">Photosynthesis</keyword>
<keyword id="KW-0604">Photosystem II</keyword>
<keyword id="KW-0793">Thylakoid</keyword>
<keyword id="KW-0812">Transmembrane</keyword>
<keyword id="KW-1133">Transmembrane helix</keyword>
<reference key="1">
    <citation type="journal article" date="2007" name="Photosyn. Res.">
        <title>Complete nucleotide sequence of the freshwater unicellular cyanobacterium Synechococcus elongatus PCC 6301 chromosome: gene content and organization.</title>
        <authorList>
            <person name="Sugita C."/>
            <person name="Ogata K."/>
            <person name="Shikata M."/>
            <person name="Jikuya H."/>
            <person name="Takano J."/>
            <person name="Furumichi M."/>
            <person name="Kanehisa M."/>
            <person name="Omata T."/>
            <person name="Sugiura M."/>
            <person name="Sugita M."/>
        </authorList>
    </citation>
    <scope>NUCLEOTIDE SEQUENCE [LARGE SCALE GENOMIC DNA]</scope>
    <source>
        <strain>ATCC 27144 / PCC 6301 / SAUG 1402/1</strain>
    </source>
</reference>
<protein>
    <recommendedName>
        <fullName evidence="1">Photosystem II reaction center protein X</fullName>
    </recommendedName>
</protein>
<feature type="chain" id="PRO_0000345379" description="Photosystem II reaction center protein X">
    <location>
        <begin position="1"/>
        <end position="39"/>
    </location>
</feature>
<feature type="transmembrane region" description="Helical" evidence="1">
    <location>
        <begin position="8"/>
        <end position="28"/>
    </location>
</feature>
<sequence>MTPTLSAFIWSLVLGGVIVVIPLTVALIFISQTDKVRRS</sequence>
<comment type="function">
    <text evidence="1">Involved in the binding and/or turnover of quinones at the Q(B) site of photosystem II (PSII). PSII is a light-driven water plastoquinone oxidoreductase, using light energy to abstract electrons from H(2)O, generating a proton gradient subsequently used for ATP formation.</text>
</comment>
<comment type="subunit">
    <text evidence="1">PSII is composed of 1 copy each of membrane proteins PsbA, PsbB, PsbC, PsbD, PsbE, PsbF, PsbH, PsbI, PsbJ, PsbK, PsbL, PsbM, PsbT, PsbX, PsbY, PsbZ, Psb30/Ycf12, peripheral proteins PsbO, CyanoQ (PsbQ), PsbU, PsbV and a large number of cofactors. It forms dimeric complexes.</text>
</comment>
<comment type="subcellular location">
    <subcellularLocation>
        <location evidence="1">Cellular thylakoid membrane</location>
        <topology evidence="1">Single-pass membrane protein</topology>
    </subcellularLocation>
</comment>
<comment type="similarity">
    <text evidence="1">Belongs to the PsbX family. Type 1 subfamily.</text>
</comment>
<proteinExistence type="inferred from homology"/>
<gene>
    <name evidence="1" type="primary">psbX</name>
    <name type="ordered locus">syc2079_d</name>
</gene>
<dbReference type="EMBL" id="AP008231">
    <property type="protein sequence ID" value="BAD80269.1"/>
    <property type="molecule type" value="Genomic_DNA"/>
</dbReference>
<dbReference type="RefSeq" id="WP_011244389.1">
    <property type="nucleotide sequence ID" value="NZ_CP085785.1"/>
</dbReference>
<dbReference type="SMR" id="Q5N0A1"/>
<dbReference type="KEGG" id="syc:syc2079_d"/>
<dbReference type="Proteomes" id="UP000001175">
    <property type="component" value="Chromosome"/>
</dbReference>
<dbReference type="GO" id="GO:0009523">
    <property type="term" value="C:photosystem II"/>
    <property type="evidence" value="ECO:0007669"/>
    <property type="project" value="UniProtKB-KW"/>
</dbReference>
<dbReference type="GO" id="GO:0031676">
    <property type="term" value="C:plasma membrane-derived thylakoid membrane"/>
    <property type="evidence" value="ECO:0007669"/>
    <property type="project" value="UniProtKB-SubCell"/>
</dbReference>
<dbReference type="GO" id="GO:0015979">
    <property type="term" value="P:photosynthesis"/>
    <property type="evidence" value="ECO:0007669"/>
    <property type="project" value="UniProtKB-UniRule"/>
</dbReference>
<dbReference type="Gene3D" id="1.20.5.510">
    <property type="entry name" value="Single helix bin"/>
    <property type="match status" value="1"/>
</dbReference>
<dbReference type="HAMAP" id="MF_01386">
    <property type="entry name" value="PSII_PsbX_1"/>
    <property type="match status" value="1"/>
</dbReference>
<dbReference type="InterPro" id="IPR009518">
    <property type="entry name" value="PSII_PsbX"/>
</dbReference>
<dbReference type="InterPro" id="IPR023431">
    <property type="entry name" value="PSII_PsbX_type_1_subfam"/>
</dbReference>
<dbReference type="Pfam" id="PF06596">
    <property type="entry name" value="PsbX"/>
    <property type="match status" value="1"/>
</dbReference>
<organism>
    <name type="scientific">Synechococcus sp. (strain ATCC 27144 / PCC 6301 / SAUG 1402/1)</name>
    <name type="common">Anacystis nidulans</name>
    <dbReference type="NCBI Taxonomy" id="269084"/>
    <lineage>
        <taxon>Bacteria</taxon>
        <taxon>Bacillati</taxon>
        <taxon>Cyanobacteriota</taxon>
        <taxon>Cyanophyceae</taxon>
        <taxon>Synechococcales</taxon>
        <taxon>Synechococcaceae</taxon>
        <taxon>Synechococcus</taxon>
    </lineage>
</organism>